<comment type="function">
    <text evidence="1">F(1)F(0) ATP synthase produces ATP from ADP in the presence of a proton or sodium gradient. F-type ATPases consist of two structural domains, F(1) containing the extramembraneous catalytic core and F(0) containing the membrane proton channel, linked together by a central stalk and a peripheral stalk. During catalysis, ATP synthesis in the catalytic domain of F(1) is coupled via a rotary mechanism of the central stalk subunits to proton translocation.</text>
</comment>
<comment type="function">
    <text evidence="1">Component of the F(0) channel, it forms part of the peripheral stalk, linking F(1) to F(0).</text>
</comment>
<comment type="subunit">
    <text evidence="1">F-type ATPases have 2 components, F(1) - the catalytic core - and F(0) - the membrane proton channel. F(1) has five subunits: alpha(3), beta(3), gamma(1), delta(1), epsilon(1). F(0) has three main subunits: a(1), b(2) and c(10-14). The alpha and beta chains form an alternating ring which encloses part of the gamma chain. F(1) is attached to F(0) by a central stalk formed by the gamma and epsilon chains, while a peripheral stalk is formed by the delta and b chains.</text>
</comment>
<comment type="subcellular location">
    <subcellularLocation>
        <location evidence="1">Cell inner membrane</location>
        <topology evidence="1">Single-pass membrane protein</topology>
    </subcellularLocation>
</comment>
<comment type="similarity">
    <text evidence="1">Belongs to the ATPase B chain family.</text>
</comment>
<name>ATPF_WOLSU</name>
<proteinExistence type="inferred from homology"/>
<protein>
    <recommendedName>
        <fullName evidence="1">ATP synthase subunit b</fullName>
    </recommendedName>
    <alternativeName>
        <fullName evidence="1">ATP synthase F(0) sector subunit b</fullName>
    </alternativeName>
    <alternativeName>
        <fullName evidence="1">ATPase subunit I</fullName>
    </alternativeName>
    <alternativeName>
        <fullName evidence="1">F-type ATPase subunit b</fullName>
        <shortName evidence="1">F-ATPase subunit b</shortName>
    </alternativeName>
</protein>
<evidence type="ECO:0000255" key="1">
    <source>
        <dbReference type="HAMAP-Rule" id="MF_01398"/>
    </source>
</evidence>
<sequence length="170" mass="19363">MKGKYFIPCLLLPTMMLASGGGGETDIVERTINFVIFIAIFYYLAADKIKAIFVARQESIAAELEKVQEKLKESKKAKEQAQKRFEESKRMAEDVILTAKKEVVLLTQKVEDSTKGDIENLIRQYNDSMEFEKRKAERAIIDEILAELFESDATKLDKSAYSEILLKKVA</sequence>
<feature type="chain" id="PRO_0000368863" description="ATP synthase subunit b">
    <location>
        <begin position="1"/>
        <end position="170"/>
    </location>
</feature>
<feature type="transmembrane region" description="Helical" evidence="1">
    <location>
        <begin position="5"/>
        <end position="25"/>
    </location>
</feature>
<gene>
    <name evidence="1" type="primary">atpF</name>
    <name type="ordered locus">WS0512</name>
</gene>
<organism>
    <name type="scientific">Wolinella succinogenes (strain ATCC 29543 / DSM 1740 / CCUG 13145 / JCM 31913 / LMG 7466 / NCTC 11488 / FDC 602W)</name>
    <name type="common">Vibrio succinogenes</name>
    <dbReference type="NCBI Taxonomy" id="273121"/>
    <lineage>
        <taxon>Bacteria</taxon>
        <taxon>Pseudomonadati</taxon>
        <taxon>Campylobacterota</taxon>
        <taxon>Epsilonproteobacteria</taxon>
        <taxon>Campylobacterales</taxon>
        <taxon>Helicobacteraceae</taxon>
        <taxon>Wolinella</taxon>
    </lineage>
</organism>
<reference key="1">
    <citation type="journal article" date="2003" name="Proc. Natl. Acad. Sci. U.S.A.">
        <title>Complete genome sequence and analysis of Wolinella succinogenes.</title>
        <authorList>
            <person name="Baar C."/>
            <person name="Eppinger M."/>
            <person name="Raddatz G."/>
            <person name="Simon J."/>
            <person name="Lanz C."/>
            <person name="Klimmek O."/>
            <person name="Nandakumar R."/>
            <person name="Gross R."/>
            <person name="Rosinus A."/>
            <person name="Keller H."/>
            <person name="Jagtap P."/>
            <person name="Linke B."/>
            <person name="Meyer F."/>
            <person name="Lederer H."/>
            <person name="Schuster S.C."/>
        </authorList>
    </citation>
    <scope>NUCLEOTIDE SEQUENCE [LARGE SCALE GENOMIC DNA]</scope>
    <source>
        <strain>ATCC 29543 / DSM 1740 / CCUG 13145 / JCM 31913 / LMG 7466 / NCTC 11488 / FDC 602W</strain>
    </source>
</reference>
<dbReference type="EMBL" id="BX571658">
    <property type="protein sequence ID" value="CAE09649.1"/>
    <property type="molecule type" value="Genomic_DNA"/>
</dbReference>
<dbReference type="RefSeq" id="WP_011138449.1">
    <property type="nucleotide sequence ID" value="NC_005090.1"/>
</dbReference>
<dbReference type="SMR" id="Q7MA22"/>
<dbReference type="STRING" id="273121.WS0512"/>
<dbReference type="KEGG" id="wsu:WS0512"/>
<dbReference type="eggNOG" id="COG0711">
    <property type="taxonomic scope" value="Bacteria"/>
</dbReference>
<dbReference type="HOGENOM" id="CLU_129781_0_0_7"/>
<dbReference type="Proteomes" id="UP000000422">
    <property type="component" value="Chromosome"/>
</dbReference>
<dbReference type="GO" id="GO:0005886">
    <property type="term" value="C:plasma membrane"/>
    <property type="evidence" value="ECO:0007669"/>
    <property type="project" value="UniProtKB-SubCell"/>
</dbReference>
<dbReference type="GO" id="GO:0045259">
    <property type="term" value="C:proton-transporting ATP synthase complex"/>
    <property type="evidence" value="ECO:0007669"/>
    <property type="project" value="UniProtKB-KW"/>
</dbReference>
<dbReference type="GO" id="GO:0046933">
    <property type="term" value="F:proton-transporting ATP synthase activity, rotational mechanism"/>
    <property type="evidence" value="ECO:0007669"/>
    <property type="project" value="UniProtKB-UniRule"/>
</dbReference>
<dbReference type="CDD" id="cd06503">
    <property type="entry name" value="ATP-synt_Fo_b"/>
    <property type="match status" value="1"/>
</dbReference>
<dbReference type="HAMAP" id="MF_01398">
    <property type="entry name" value="ATP_synth_b_bprime"/>
    <property type="match status" value="1"/>
</dbReference>
<dbReference type="InterPro" id="IPR002146">
    <property type="entry name" value="ATP_synth_b/b'su_bac/chlpt"/>
</dbReference>
<dbReference type="NCBIfam" id="NF006292">
    <property type="entry name" value="PRK08475.1"/>
    <property type="match status" value="1"/>
</dbReference>
<dbReference type="Pfam" id="PF00430">
    <property type="entry name" value="ATP-synt_B"/>
    <property type="match status" value="1"/>
</dbReference>
<accession>Q7MA22</accession>
<keyword id="KW-0066">ATP synthesis</keyword>
<keyword id="KW-0997">Cell inner membrane</keyword>
<keyword id="KW-1003">Cell membrane</keyword>
<keyword id="KW-0138">CF(0)</keyword>
<keyword id="KW-0375">Hydrogen ion transport</keyword>
<keyword id="KW-0406">Ion transport</keyword>
<keyword id="KW-0472">Membrane</keyword>
<keyword id="KW-1185">Reference proteome</keyword>
<keyword id="KW-0812">Transmembrane</keyword>
<keyword id="KW-1133">Transmembrane helix</keyword>
<keyword id="KW-0813">Transport</keyword>